<keyword id="KW-0456">Lyase</keyword>
<keyword id="KW-1185">Reference proteome</keyword>
<reference key="1">
    <citation type="journal article" date="2007" name="Nat. Biotechnol.">
        <title>Genome sequencing and analysis of the versatile cell factory Aspergillus niger CBS 513.88.</title>
        <authorList>
            <person name="Pel H.J."/>
            <person name="de Winde J.H."/>
            <person name="Archer D.B."/>
            <person name="Dyer P.S."/>
            <person name="Hofmann G."/>
            <person name="Schaap P.J."/>
            <person name="Turner G."/>
            <person name="de Vries R.P."/>
            <person name="Albang R."/>
            <person name="Albermann K."/>
            <person name="Andersen M.R."/>
            <person name="Bendtsen J.D."/>
            <person name="Benen J.A.E."/>
            <person name="van den Berg M."/>
            <person name="Breestraat S."/>
            <person name="Caddick M.X."/>
            <person name="Contreras R."/>
            <person name="Cornell M."/>
            <person name="Coutinho P.M."/>
            <person name="Danchin E.G.J."/>
            <person name="Debets A.J.M."/>
            <person name="Dekker P."/>
            <person name="van Dijck P.W.M."/>
            <person name="van Dijk A."/>
            <person name="Dijkhuizen L."/>
            <person name="Driessen A.J.M."/>
            <person name="d'Enfert C."/>
            <person name="Geysens S."/>
            <person name="Goosen C."/>
            <person name="Groot G.S.P."/>
            <person name="de Groot P.W.J."/>
            <person name="Guillemette T."/>
            <person name="Henrissat B."/>
            <person name="Herweijer M."/>
            <person name="van den Hombergh J.P.T.W."/>
            <person name="van den Hondel C.A.M.J.J."/>
            <person name="van der Heijden R.T.J.M."/>
            <person name="van der Kaaij R.M."/>
            <person name="Klis F.M."/>
            <person name="Kools H.J."/>
            <person name="Kubicek C.P."/>
            <person name="van Kuyk P.A."/>
            <person name="Lauber J."/>
            <person name="Lu X."/>
            <person name="van der Maarel M.J.E.C."/>
            <person name="Meulenberg R."/>
            <person name="Menke H."/>
            <person name="Mortimer M.A."/>
            <person name="Nielsen J."/>
            <person name="Oliver S.G."/>
            <person name="Olsthoorn M."/>
            <person name="Pal K."/>
            <person name="van Peij N.N.M.E."/>
            <person name="Ram A.F.J."/>
            <person name="Rinas U."/>
            <person name="Roubos J.A."/>
            <person name="Sagt C.M.J."/>
            <person name="Schmoll M."/>
            <person name="Sun J."/>
            <person name="Ussery D."/>
            <person name="Varga J."/>
            <person name="Vervecken W."/>
            <person name="van de Vondervoort P.J.J."/>
            <person name="Wedler H."/>
            <person name="Woesten H.A.B."/>
            <person name="Zeng A.-P."/>
            <person name="van Ooyen A.J.J."/>
            <person name="Visser J."/>
            <person name="Stam H."/>
        </authorList>
    </citation>
    <scope>NUCLEOTIDE SEQUENCE [LARGE SCALE GENOMIC DNA]</scope>
    <source>
        <strain>ATCC MYA-4892 / CBS 513.88 / FGSC A1513</strain>
    </source>
</reference>
<gene>
    <name evidence="1" type="primary">cyn1</name>
    <name type="ORF">An15g07070</name>
</gene>
<evidence type="ECO:0000255" key="1">
    <source>
        <dbReference type="HAMAP-Rule" id="MF_03139"/>
    </source>
</evidence>
<proteinExistence type="inferred from homology"/>
<protein>
    <recommendedName>
        <fullName evidence="1">Cyanate hydratase</fullName>
        <shortName evidence="1">Cyanase</shortName>
        <ecNumber evidence="1">4.2.1.104</ecNumber>
    </recommendedName>
    <alternativeName>
        <fullName evidence="1">Cyanate hydrolase</fullName>
    </alternativeName>
    <alternativeName>
        <fullName evidence="1">Cyanate lyase</fullName>
    </alternativeName>
</protein>
<dbReference type="EC" id="4.2.1.104" evidence="1"/>
<dbReference type="EMBL" id="AM270351">
    <property type="protein sequence ID" value="CAK48542.1"/>
    <property type="molecule type" value="Genomic_DNA"/>
</dbReference>
<dbReference type="RefSeq" id="XP_001397234.1">
    <property type="nucleotide sequence ID" value="XM_001397197.2"/>
</dbReference>
<dbReference type="SMR" id="A2R692"/>
<dbReference type="EnsemblFungi" id="CAK48542">
    <property type="protein sequence ID" value="CAK48542"/>
    <property type="gene ID" value="An15g07070"/>
</dbReference>
<dbReference type="GeneID" id="4988308"/>
<dbReference type="KEGG" id="ang:An15g07070"/>
<dbReference type="VEuPathDB" id="FungiDB:An15g07070"/>
<dbReference type="HOGENOM" id="CLU_103452_0_0_1"/>
<dbReference type="Proteomes" id="UP000006706">
    <property type="component" value="Chromosome 3R"/>
</dbReference>
<dbReference type="GO" id="GO:0008824">
    <property type="term" value="F:cyanate hydratase activity"/>
    <property type="evidence" value="ECO:0007669"/>
    <property type="project" value="UniProtKB-UniRule"/>
</dbReference>
<dbReference type="GO" id="GO:0003677">
    <property type="term" value="F:DNA binding"/>
    <property type="evidence" value="ECO:0007669"/>
    <property type="project" value="InterPro"/>
</dbReference>
<dbReference type="GO" id="GO:0009439">
    <property type="term" value="P:cyanate metabolic process"/>
    <property type="evidence" value="ECO:0007669"/>
    <property type="project" value="UniProtKB-UniRule"/>
</dbReference>
<dbReference type="CDD" id="cd00559">
    <property type="entry name" value="Cyanase_C"/>
    <property type="match status" value="1"/>
</dbReference>
<dbReference type="Gene3D" id="3.30.1160.10">
    <property type="entry name" value="Cyanate lyase, C-terminal domain"/>
    <property type="match status" value="1"/>
</dbReference>
<dbReference type="Gene3D" id="1.10.260.40">
    <property type="entry name" value="lambda repressor-like DNA-binding domains"/>
    <property type="match status" value="1"/>
</dbReference>
<dbReference type="HAMAP" id="MF_00535">
    <property type="entry name" value="Cyanate_hydrat"/>
    <property type="match status" value="1"/>
</dbReference>
<dbReference type="InterPro" id="IPR008076">
    <property type="entry name" value="Cyanase"/>
</dbReference>
<dbReference type="InterPro" id="IPR003712">
    <property type="entry name" value="Cyanate_lyase_C"/>
</dbReference>
<dbReference type="InterPro" id="IPR036581">
    <property type="entry name" value="Cyanate_lyase_C_sf"/>
</dbReference>
<dbReference type="InterPro" id="IPR010982">
    <property type="entry name" value="Lambda_DNA-bd_dom_sf"/>
</dbReference>
<dbReference type="NCBIfam" id="TIGR00673">
    <property type="entry name" value="cynS"/>
    <property type="match status" value="1"/>
</dbReference>
<dbReference type="PANTHER" id="PTHR34186">
    <property type="entry name" value="CYANATE HYDRATASE"/>
    <property type="match status" value="1"/>
</dbReference>
<dbReference type="PANTHER" id="PTHR34186:SF2">
    <property type="entry name" value="CYANATE HYDRATASE"/>
    <property type="match status" value="1"/>
</dbReference>
<dbReference type="Pfam" id="PF02560">
    <property type="entry name" value="Cyanate_lyase"/>
    <property type="match status" value="1"/>
</dbReference>
<dbReference type="PIRSF" id="PIRSF001263">
    <property type="entry name" value="Cyanate_hydratas"/>
    <property type="match status" value="1"/>
</dbReference>
<dbReference type="PRINTS" id="PR01693">
    <property type="entry name" value="CYANASE"/>
</dbReference>
<dbReference type="SMART" id="SM01116">
    <property type="entry name" value="Cyanate_lyase"/>
    <property type="match status" value="1"/>
</dbReference>
<dbReference type="SUPFAM" id="SSF55234">
    <property type="entry name" value="Cyanase C-terminal domain"/>
    <property type="match status" value="1"/>
</dbReference>
<dbReference type="SUPFAM" id="SSF47413">
    <property type="entry name" value="lambda repressor-like DNA-binding domains"/>
    <property type="match status" value="1"/>
</dbReference>
<sequence length="160" mass="17793">MSLATLDTAQHPSLPSASETLFKAKAAKKLSFEQIAQHIGRNEVATAAIFYGQAKASPEDIEKLSGLLTIPYDALEERLSGFPDRGRSVEMPPKEPLIYRLYEIVQNYGYAYKAVLNEKFGDGIMSAISFSTKVEKETDADGNNWAVITLRGKWLPFSRF</sequence>
<name>CYNS_ASPNC</name>
<organism>
    <name type="scientific">Aspergillus niger (strain ATCC MYA-4892 / CBS 513.88 / FGSC A1513)</name>
    <dbReference type="NCBI Taxonomy" id="425011"/>
    <lineage>
        <taxon>Eukaryota</taxon>
        <taxon>Fungi</taxon>
        <taxon>Dikarya</taxon>
        <taxon>Ascomycota</taxon>
        <taxon>Pezizomycotina</taxon>
        <taxon>Eurotiomycetes</taxon>
        <taxon>Eurotiomycetidae</taxon>
        <taxon>Eurotiales</taxon>
        <taxon>Aspergillaceae</taxon>
        <taxon>Aspergillus</taxon>
        <taxon>Aspergillus subgen. Circumdati</taxon>
    </lineage>
</organism>
<accession>A2R692</accession>
<feature type="chain" id="PRO_0000403243" description="Cyanate hydratase">
    <location>
        <begin position="1"/>
        <end position="160"/>
    </location>
</feature>
<feature type="active site" evidence="1">
    <location>
        <position position="100"/>
    </location>
</feature>
<feature type="active site" evidence="1">
    <location>
        <position position="103"/>
    </location>
</feature>
<feature type="active site" evidence="1">
    <location>
        <position position="126"/>
    </location>
</feature>
<comment type="function">
    <text evidence="1">Catalyzes the reaction of cyanate with bicarbonate to produce ammonia and carbon dioxide.</text>
</comment>
<comment type="catalytic activity">
    <reaction evidence="1">
        <text>cyanate + hydrogencarbonate + 3 H(+) = NH4(+) + 2 CO2</text>
        <dbReference type="Rhea" id="RHEA:11120"/>
        <dbReference type="ChEBI" id="CHEBI:15378"/>
        <dbReference type="ChEBI" id="CHEBI:16526"/>
        <dbReference type="ChEBI" id="CHEBI:17544"/>
        <dbReference type="ChEBI" id="CHEBI:28938"/>
        <dbReference type="ChEBI" id="CHEBI:29195"/>
        <dbReference type="EC" id="4.2.1.104"/>
    </reaction>
</comment>
<comment type="similarity">
    <text evidence="1">Belongs to the cyanase family.</text>
</comment>